<sequence length="103" mass="12131">MAKKSLIQREKKRHKLEQKYHLIRRSSKKKIRSKVSPLSLSEKTKMQEKLQSLPRNSAPTRLHRRCFLTGRPRANYRDFGLSGHILREMVYACLLPGATRSSW</sequence>
<feature type="chain" id="PRO_0000226939" description="Small ribosomal subunit protein uS14c">
    <location>
        <begin position="1"/>
        <end position="103"/>
    </location>
</feature>
<feature type="region of interest" description="Disordered" evidence="2">
    <location>
        <begin position="26"/>
        <end position="56"/>
    </location>
</feature>
<keyword id="KW-0150">Chloroplast</keyword>
<keyword id="KW-0934">Plastid</keyword>
<keyword id="KW-0687">Ribonucleoprotein</keyword>
<keyword id="KW-0689">Ribosomal protein</keyword>
<keyword id="KW-0694">RNA-binding</keyword>
<keyword id="KW-0699">rRNA-binding</keyword>
<evidence type="ECO:0000255" key="1">
    <source>
        <dbReference type="HAMAP-Rule" id="MF_00537"/>
    </source>
</evidence>
<evidence type="ECO:0000256" key="2">
    <source>
        <dbReference type="SAM" id="MobiDB-lite"/>
    </source>
</evidence>
<evidence type="ECO:0000305" key="3"/>
<organism>
    <name type="scientific">Saccharum officinarum</name>
    <name type="common">Sugarcane</name>
    <dbReference type="NCBI Taxonomy" id="4547"/>
    <lineage>
        <taxon>Eukaryota</taxon>
        <taxon>Viridiplantae</taxon>
        <taxon>Streptophyta</taxon>
        <taxon>Embryophyta</taxon>
        <taxon>Tracheophyta</taxon>
        <taxon>Spermatophyta</taxon>
        <taxon>Magnoliopsida</taxon>
        <taxon>Liliopsida</taxon>
        <taxon>Poales</taxon>
        <taxon>Poaceae</taxon>
        <taxon>PACMAD clade</taxon>
        <taxon>Panicoideae</taxon>
        <taxon>Andropogonodae</taxon>
        <taxon>Andropogoneae</taxon>
        <taxon>Saccharinae</taxon>
        <taxon>Saccharum</taxon>
        <taxon>Saccharum officinarum species complex</taxon>
    </lineage>
</organism>
<protein>
    <recommendedName>
        <fullName evidence="1">Small ribosomal subunit protein uS14c</fullName>
    </recommendedName>
    <alternativeName>
        <fullName evidence="3">30S ribosomal protein S14, chloroplastic</fullName>
    </alternativeName>
</protein>
<dbReference type="EMBL" id="AP006714">
    <property type="protein sequence ID" value="BAD27291.1"/>
    <property type="molecule type" value="Genomic_DNA"/>
</dbReference>
<dbReference type="RefSeq" id="YP_009389569.1">
    <property type="nucleotide sequence ID" value="NC_035224.1"/>
</dbReference>
<dbReference type="SMR" id="Q6ENW5"/>
<dbReference type="GeneID" id="33347872"/>
<dbReference type="GO" id="GO:0009507">
    <property type="term" value="C:chloroplast"/>
    <property type="evidence" value="ECO:0007669"/>
    <property type="project" value="UniProtKB-SubCell"/>
</dbReference>
<dbReference type="GO" id="GO:0015935">
    <property type="term" value="C:small ribosomal subunit"/>
    <property type="evidence" value="ECO:0007669"/>
    <property type="project" value="TreeGrafter"/>
</dbReference>
<dbReference type="GO" id="GO:0019843">
    <property type="term" value="F:rRNA binding"/>
    <property type="evidence" value="ECO:0007669"/>
    <property type="project" value="UniProtKB-UniRule"/>
</dbReference>
<dbReference type="GO" id="GO:0003735">
    <property type="term" value="F:structural constituent of ribosome"/>
    <property type="evidence" value="ECO:0007669"/>
    <property type="project" value="InterPro"/>
</dbReference>
<dbReference type="GO" id="GO:0006412">
    <property type="term" value="P:translation"/>
    <property type="evidence" value="ECO:0007669"/>
    <property type="project" value="UniProtKB-UniRule"/>
</dbReference>
<dbReference type="FunFam" id="1.10.287.1480:FF:000001">
    <property type="entry name" value="30S ribosomal protein S14"/>
    <property type="match status" value="1"/>
</dbReference>
<dbReference type="Gene3D" id="1.10.287.1480">
    <property type="match status" value="1"/>
</dbReference>
<dbReference type="HAMAP" id="MF_00537">
    <property type="entry name" value="Ribosomal_uS14_1"/>
    <property type="match status" value="1"/>
</dbReference>
<dbReference type="InterPro" id="IPR001209">
    <property type="entry name" value="Ribosomal_uS14"/>
</dbReference>
<dbReference type="InterPro" id="IPR023036">
    <property type="entry name" value="Ribosomal_uS14_bac/plastid"/>
</dbReference>
<dbReference type="InterPro" id="IPR018271">
    <property type="entry name" value="Ribosomal_uS14_CS"/>
</dbReference>
<dbReference type="NCBIfam" id="NF006477">
    <property type="entry name" value="PRK08881.1"/>
    <property type="match status" value="1"/>
</dbReference>
<dbReference type="PANTHER" id="PTHR19836">
    <property type="entry name" value="30S RIBOSOMAL PROTEIN S14"/>
    <property type="match status" value="1"/>
</dbReference>
<dbReference type="PANTHER" id="PTHR19836:SF19">
    <property type="entry name" value="SMALL RIBOSOMAL SUBUNIT PROTEIN US14M"/>
    <property type="match status" value="1"/>
</dbReference>
<dbReference type="Pfam" id="PF00253">
    <property type="entry name" value="Ribosomal_S14"/>
    <property type="match status" value="1"/>
</dbReference>
<dbReference type="SUPFAM" id="SSF57716">
    <property type="entry name" value="Glucocorticoid receptor-like (DNA-binding domain)"/>
    <property type="match status" value="1"/>
</dbReference>
<dbReference type="PROSITE" id="PS00527">
    <property type="entry name" value="RIBOSOMAL_S14"/>
    <property type="match status" value="1"/>
</dbReference>
<name>RR14_SACOF</name>
<proteinExistence type="inferred from homology"/>
<gene>
    <name evidence="1" type="primary">rps14</name>
</gene>
<accession>Q6ENW5</accession>
<comment type="function">
    <text evidence="1">Binds 16S rRNA, required for the assembly of 30S particles.</text>
</comment>
<comment type="subunit">
    <text evidence="1">Part of the 30S ribosomal subunit.</text>
</comment>
<comment type="subcellular location">
    <subcellularLocation>
        <location>Plastid</location>
        <location>Chloroplast</location>
    </subcellularLocation>
</comment>
<comment type="similarity">
    <text evidence="1">Belongs to the universal ribosomal protein uS14 family.</text>
</comment>
<geneLocation type="chloroplast"/>
<reference key="1">
    <citation type="journal article" date="2004" name="DNA Res.">
        <title>Complete nucleotide sequence of the sugarcane (Saccharum officinarum) chloroplast genome: a comparative analysis of four monocot chloroplast genomes.</title>
        <authorList>
            <person name="Asano T."/>
            <person name="Tsudzuki T."/>
            <person name="Takahashi S."/>
            <person name="Shimada H."/>
            <person name="Kadowaki K."/>
        </authorList>
    </citation>
    <scope>NUCLEOTIDE SEQUENCE [LARGE SCALE GENOMIC DNA]</scope>
</reference>